<keyword id="KW-0150">Chloroplast</keyword>
<keyword id="KW-0240">DNA-directed RNA polymerase</keyword>
<keyword id="KW-0548">Nucleotidyltransferase</keyword>
<keyword id="KW-0934">Plastid</keyword>
<keyword id="KW-0804">Transcription</keyword>
<keyword id="KW-0808">Transferase</keyword>
<comment type="function">
    <text evidence="1">DNA-dependent RNA polymerase catalyzes the transcription of DNA into RNA using the four ribonucleoside triphosphates as substrates.</text>
</comment>
<comment type="catalytic activity">
    <reaction evidence="1">
        <text>RNA(n) + a ribonucleoside 5'-triphosphate = RNA(n+1) + diphosphate</text>
        <dbReference type="Rhea" id="RHEA:21248"/>
        <dbReference type="Rhea" id="RHEA-COMP:14527"/>
        <dbReference type="Rhea" id="RHEA-COMP:17342"/>
        <dbReference type="ChEBI" id="CHEBI:33019"/>
        <dbReference type="ChEBI" id="CHEBI:61557"/>
        <dbReference type="ChEBI" id="CHEBI:140395"/>
        <dbReference type="EC" id="2.7.7.6"/>
    </reaction>
</comment>
<comment type="subunit">
    <text evidence="1">In plastids the minimal PEP RNA polymerase catalytic core is composed of four subunits: alpha, beta, beta', and beta''. When a (nuclear-encoded) sigma factor is associated with the core the holoenzyme is formed, which can initiate transcription.</text>
</comment>
<comment type="subcellular location">
    <subcellularLocation>
        <location>Plastid</location>
        <location>Chloroplast</location>
    </subcellularLocation>
</comment>
<comment type="similarity">
    <text evidence="1">Belongs to the RNA polymerase beta chain family.</text>
</comment>
<evidence type="ECO:0000255" key="1">
    <source>
        <dbReference type="HAMAP-Rule" id="MF_01321"/>
    </source>
</evidence>
<proteinExistence type="inferred from homology"/>
<dbReference type="EC" id="2.7.7.6" evidence="1"/>
<dbReference type="EMBL" id="AF494278">
    <property type="protein sequence ID" value="AAM96566.1"/>
    <property type="molecule type" value="Genomic_DNA"/>
</dbReference>
<dbReference type="RefSeq" id="NP_683774.1">
    <property type="nucleotide sequence ID" value="NC_004115.1"/>
</dbReference>
<dbReference type="SMR" id="Q8MA12"/>
<dbReference type="GeneID" id="860722"/>
<dbReference type="GO" id="GO:0009507">
    <property type="term" value="C:chloroplast"/>
    <property type="evidence" value="ECO:0007669"/>
    <property type="project" value="UniProtKB-SubCell"/>
</dbReference>
<dbReference type="GO" id="GO:0000428">
    <property type="term" value="C:DNA-directed RNA polymerase complex"/>
    <property type="evidence" value="ECO:0007669"/>
    <property type="project" value="UniProtKB-KW"/>
</dbReference>
<dbReference type="GO" id="GO:0005739">
    <property type="term" value="C:mitochondrion"/>
    <property type="evidence" value="ECO:0007669"/>
    <property type="project" value="GOC"/>
</dbReference>
<dbReference type="GO" id="GO:0003677">
    <property type="term" value="F:DNA binding"/>
    <property type="evidence" value="ECO:0007669"/>
    <property type="project" value="UniProtKB-UniRule"/>
</dbReference>
<dbReference type="GO" id="GO:0003899">
    <property type="term" value="F:DNA-directed RNA polymerase activity"/>
    <property type="evidence" value="ECO:0007669"/>
    <property type="project" value="UniProtKB-UniRule"/>
</dbReference>
<dbReference type="GO" id="GO:0032549">
    <property type="term" value="F:ribonucleoside binding"/>
    <property type="evidence" value="ECO:0007669"/>
    <property type="project" value="InterPro"/>
</dbReference>
<dbReference type="GO" id="GO:0006351">
    <property type="term" value="P:DNA-templated transcription"/>
    <property type="evidence" value="ECO:0007669"/>
    <property type="project" value="UniProtKB-UniRule"/>
</dbReference>
<dbReference type="CDD" id="cd00653">
    <property type="entry name" value="RNA_pol_B_RPB2"/>
    <property type="match status" value="1"/>
</dbReference>
<dbReference type="Gene3D" id="2.40.50.100">
    <property type="match status" value="1"/>
</dbReference>
<dbReference type="Gene3D" id="2.40.50.150">
    <property type="match status" value="1"/>
</dbReference>
<dbReference type="Gene3D" id="3.90.1100.10">
    <property type="match status" value="1"/>
</dbReference>
<dbReference type="Gene3D" id="2.30.150.10">
    <property type="entry name" value="DNA-directed RNA polymerase, beta subunit, external 1 domain"/>
    <property type="match status" value="1"/>
</dbReference>
<dbReference type="Gene3D" id="2.40.270.10">
    <property type="entry name" value="DNA-directed RNA polymerase, subunit 2, domain 6"/>
    <property type="match status" value="1"/>
</dbReference>
<dbReference type="Gene3D" id="3.90.1800.10">
    <property type="entry name" value="RNA polymerase alpha subunit dimerisation domain"/>
    <property type="match status" value="1"/>
</dbReference>
<dbReference type="Gene3D" id="3.90.1110.10">
    <property type="entry name" value="RNA polymerase Rpb2, domain 2"/>
    <property type="match status" value="1"/>
</dbReference>
<dbReference type="HAMAP" id="MF_01321">
    <property type="entry name" value="RNApol_bact_RpoB"/>
    <property type="match status" value="1"/>
</dbReference>
<dbReference type="InterPro" id="IPR042107">
    <property type="entry name" value="DNA-dir_RNA_pol_bsu_ext_1_sf"/>
</dbReference>
<dbReference type="InterPro" id="IPR015712">
    <property type="entry name" value="DNA-dir_RNA_pol_su2"/>
</dbReference>
<dbReference type="InterPro" id="IPR007120">
    <property type="entry name" value="DNA-dir_RNAP_su2_dom"/>
</dbReference>
<dbReference type="InterPro" id="IPR037033">
    <property type="entry name" value="DNA-dir_RNAP_su2_hyb_sf"/>
</dbReference>
<dbReference type="InterPro" id="IPR010243">
    <property type="entry name" value="RNA_pol_bsu_bac"/>
</dbReference>
<dbReference type="InterPro" id="IPR007121">
    <property type="entry name" value="RNA_pol_bsu_CS"/>
</dbReference>
<dbReference type="InterPro" id="IPR007644">
    <property type="entry name" value="RNA_pol_bsu_protrusion"/>
</dbReference>
<dbReference type="InterPro" id="IPR007642">
    <property type="entry name" value="RNA_pol_Rpb2_2"/>
</dbReference>
<dbReference type="InterPro" id="IPR037034">
    <property type="entry name" value="RNA_pol_Rpb2_2_sf"/>
</dbReference>
<dbReference type="InterPro" id="IPR007645">
    <property type="entry name" value="RNA_pol_Rpb2_3"/>
</dbReference>
<dbReference type="InterPro" id="IPR007641">
    <property type="entry name" value="RNA_pol_Rpb2_7"/>
</dbReference>
<dbReference type="InterPro" id="IPR014724">
    <property type="entry name" value="RNA_pol_RPB2_OB-fold"/>
</dbReference>
<dbReference type="NCBIfam" id="NF001616">
    <property type="entry name" value="PRK00405.1"/>
    <property type="match status" value="1"/>
</dbReference>
<dbReference type="PANTHER" id="PTHR20856">
    <property type="entry name" value="DNA-DIRECTED RNA POLYMERASE I SUBUNIT 2"/>
    <property type="match status" value="1"/>
</dbReference>
<dbReference type="Pfam" id="PF04563">
    <property type="entry name" value="RNA_pol_Rpb2_1"/>
    <property type="match status" value="1"/>
</dbReference>
<dbReference type="Pfam" id="PF04561">
    <property type="entry name" value="RNA_pol_Rpb2_2"/>
    <property type="match status" value="1"/>
</dbReference>
<dbReference type="Pfam" id="PF04565">
    <property type="entry name" value="RNA_pol_Rpb2_3"/>
    <property type="match status" value="1"/>
</dbReference>
<dbReference type="Pfam" id="PF00562">
    <property type="entry name" value="RNA_pol_Rpb2_6"/>
    <property type="match status" value="1"/>
</dbReference>
<dbReference type="Pfam" id="PF04560">
    <property type="entry name" value="RNA_pol_Rpb2_7"/>
    <property type="match status" value="1"/>
</dbReference>
<dbReference type="SUPFAM" id="SSF64484">
    <property type="entry name" value="beta and beta-prime subunits of DNA dependent RNA-polymerase"/>
    <property type="match status" value="1"/>
</dbReference>
<dbReference type="PROSITE" id="PS01166">
    <property type="entry name" value="RNA_POL_BETA"/>
    <property type="match status" value="1"/>
</dbReference>
<protein>
    <recommendedName>
        <fullName evidence="1">DNA-directed RNA polymerase subunit beta</fullName>
        <ecNumber evidence="1">2.7.7.6</ecNumber>
    </recommendedName>
    <alternativeName>
        <fullName evidence="1">PEP</fullName>
    </alternativeName>
    <alternativeName>
        <fullName evidence="1">Plastid-encoded RNA polymerase subunit beta</fullName>
        <shortName evidence="1">RNA polymerase subunit beta</shortName>
    </alternativeName>
</protein>
<geneLocation type="chloroplast"/>
<organism>
    <name type="scientific">Chaetosphaeridium globosum</name>
    <name type="common">Charophycean green alga</name>
    <name type="synonym">Herposteiron globosum</name>
    <dbReference type="NCBI Taxonomy" id="96477"/>
    <lineage>
        <taxon>Eukaryota</taxon>
        <taxon>Viridiplantae</taxon>
        <taxon>Streptophyta</taxon>
        <taxon>Coleochaetophyceae</taxon>
        <taxon>Coleochaetales</taxon>
        <taxon>Chaetosphaeridiaceae</taxon>
        <taxon>Chaetosphaeridium</taxon>
    </lineage>
</organism>
<gene>
    <name evidence="1" type="primary">rpoB</name>
</gene>
<reference key="1">
    <citation type="journal article" date="2002" name="Proc. Natl. Acad. Sci. U.S.A.">
        <title>The chloroplast and mitochondrial genome sequences of the charophyte Chaetosphaeridium globosum: insights into the timing of the events that restructured organelle DNAs within the green algal lineage that led to land plants.</title>
        <authorList>
            <person name="Turmel M."/>
            <person name="Otis C."/>
            <person name="Lemieux C."/>
        </authorList>
    </citation>
    <scope>NUCLEOTIDE SEQUENCE [LARGE SCALE GENOMIC DNA]</scope>
    <source>
        <strain>M1311</strain>
    </source>
</reference>
<sequence>MTLQTNQTEKFTLPDLGKIQLQNFYNFLTKIIYKELKAFPKIYDSEHNFEFKIYPEEFFLVEPILNERESIYKSITYSTELYVTAELNCIKNQTKQKQKVLLGHIPLITSNGSFIINGISRAVVSQILRSPGIYFGSQLDSNSKCIYTATIISESGSRLKLEIDDRKLIWARISKKRKVSAIVLLLSMGIKLSDITRSIEHPAILDNILKKKNVLSNQKDAILEIYKQLFSAGGDPNFSDNILSELQRTFFQQRCEIGLIGRSNLNKKLGLNIPDEEIFLLPEDILATINYLIKLSLGIGSLDDIDHLKNRRVKSISDFLSEQLKNALNKIENTIEQSIKNISKRKRILTPKSLINSGILLAFFKDFFGSHPLSQFLDQTNSLTELVHKRRISSLGPGGLTRRTASFHVRDIHPSHYGRICPIETSEGMNAGLVASLASNATINTMGFIESPFYQLNDSSLFDKPIFLSAREDENFRIALGNRLAIDQEIQEKQITPARYKQEFINTPWSLANLRSIFPWQYFSIGASLIPFLEHDDANRALMGSNMQRQAVPLLITERPIVGTGFEANIARDSGAPLISNIDGKIQYLDSEFIEILGVDKKTYKLKLSNYQRSNNNTCIHHRAIVQLNQWVRKGQILADGATTIRGELSLGRNILVAYMPWEGYNFEDAVLISDRLIYDDLYTSIHIQKYELEIKINHQGQDKITKDIPHIDKYFLRHLDENGLVTLGSWVEAGDVLIGKLSSQEREDSLKVPEGKLLQAIFGLQIGNSRDTSLKLPAGGEGRVIDIQWIFQDEGGIDSNNFVNVYVLQKRRIQVGDKIAGRHGNKGIVSQILSRHDMPYLQNGTSIDMVLSPLGVPSRMNVGQILECLLGFAGKFLNKNYRITPFDERYEREASRKLVLSELHKAKKLTGYPWLLEPENAGKSRLFDGRTGETFNQPVTVGSAYILKLIHQVDDKIHARSTGPYSLVTQQPVRGRSRGGGQRVGEMEVWALEGFGAAYILQEMLTVKSDHIHSRYDVLGAIVTGTTIKTPTTTPESFRLLARELRCLGIQINDIEIYHETLQKKEIEI</sequence>
<feature type="chain" id="PRO_0000048015" description="DNA-directed RNA polymerase subunit beta">
    <location>
        <begin position="1"/>
        <end position="1070"/>
    </location>
</feature>
<name>RPOB_CHAGL</name>
<accession>Q8MA12</accession>